<sequence>MITLTHVLGSDIPHHNLTVLRFFNDVLAKCLPVEQVRHFMVAAKETAPFSSFPQLDINTYSDKKALAEAVIARAQADRSARFFWHGQFNVTLWLALLSGKIKPGQVYWHVWGADLYEDAKSLKFRLFYLLRRIAQGRVGHVFATRGDLIHYQQRHPRVPASLLYFPTRMDPALTAINIDKPLAGPMTILVGNSGDTTNRHIEALKAIHQQFGPDVRVIIPMGYPANNEAYIEQVRQAGLALFSQDNLRILTEQIPFDDYLNILRECDLGYFIFNRQQGIGTLCLLTQFGVPFVLSRKNPFWQDLAEQHIPVFFYGDTLDEPMIREAQRQLAGLDKQAIAFFNPNYIEGWKQALALAAGEHP</sequence>
<dbReference type="EC" id="2.4.1.325" evidence="1"/>
<dbReference type="EMBL" id="AL590842">
    <property type="protein sequence ID" value="CAL22444.1"/>
    <property type="molecule type" value="Genomic_DNA"/>
</dbReference>
<dbReference type="EMBL" id="AE009952">
    <property type="protein sequence ID" value="AAM83960.1"/>
    <property type="molecule type" value="Genomic_DNA"/>
</dbReference>
<dbReference type="EMBL" id="AE017042">
    <property type="protein sequence ID" value="AAS63356.1"/>
    <property type="molecule type" value="Genomic_DNA"/>
</dbReference>
<dbReference type="PIR" id="AI0469">
    <property type="entry name" value="AI0469"/>
</dbReference>
<dbReference type="RefSeq" id="WP_002211979.1">
    <property type="nucleotide sequence ID" value="NZ_WUCM01000073.1"/>
</dbReference>
<dbReference type="RefSeq" id="YP_002348735.1">
    <property type="nucleotide sequence ID" value="NC_003143.1"/>
</dbReference>
<dbReference type="SMR" id="Q8ZAF0"/>
<dbReference type="IntAct" id="Q8ZAF0">
    <property type="interactions" value="2"/>
</dbReference>
<dbReference type="STRING" id="214092.YPO3857"/>
<dbReference type="CAZy" id="GT56">
    <property type="family name" value="Glycosyltransferase Family 56"/>
</dbReference>
<dbReference type="PaxDb" id="214092-YPO3857"/>
<dbReference type="DNASU" id="1145318"/>
<dbReference type="EnsemblBacteria" id="AAS63356">
    <property type="protein sequence ID" value="AAS63356"/>
    <property type="gene ID" value="YP_3188"/>
</dbReference>
<dbReference type="KEGG" id="ype:YPO3857"/>
<dbReference type="KEGG" id="ypk:y0371"/>
<dbReference type="KEGG" id="ypm:YP_3188"/>
<dbReference type="PATRIC" id="fig|214092.21.peg.4383"/>
<dbReference type="eggNOG" id="COG0554">
    <property type="taxonomic scope" value="Bacteria"/>
</dbReference>
<dbReference type="HOGENOM" id="CLU_066584_0_0_6"/>
<dbReference type="OMA" id="VIVPMGY"/>
<dbReference type="OrthoDB" id="6532169at2"/>
<dbReference type="UniPathway" id="UPA00566"/>
<dbReference type="Proteomes" id="UP000000815">
    <property type="component" value="Chromosome"/>
</dbReference>
<dbReference type="Proteomes" id="UP000001019">
    <property type="component" value="Chromosome"/>
</dbReference>
<dbReference type="Proteomes" id="UP000002490">
    <property type="component" value="Chromosome"/>
</dbReference>
<dbReference type="GO" id="GO:0005886">
    <property type="term" value="C:plasma membrane"/>
    <property type="evidence" value="ECO:0007669"/>
    <property type="project" value="UniProtKB-SubCell"/>
</dbReference>
<dbReference type="GO" id="GO:0102031">
    <property type="term" value="F:4-acetamido-4,6-dideoxy-D-galactose transferase activity"/>
    <property type="evidence" value="ECO:0007669"/>
    <property type="project" value="UniProtKB-EC"/>
</dbReference>
<dbReference type="GO" id="GO:0008417">
    <property type="term" value="F:fucosyltransferase activity"/>
    <property type="evidence" value="ECO:0007669"/>
    <property type="project" value="InterPro"/>
</dbReference>
<dbReference type="GO" id="GO:0009246">
    <property type="term" value="P:enterobacterial common antigen biosynthetic process"/>
    <property type="evidence" value="ECO:0007669"/>
    <property type="project" value="UniProtKB-UniRule"/>
</dbReference>
<dbReference type="GO" id="GO:0036065">
    <property type="term" value="P:fucosylation"/>
    <property type="evidence" value="ECO:0007669"/>
    <property type="project" value="InterPro"/>
</dbReference>
<dbReference type="HAMAP" id="MF_01002">
    <property type="entry name" value="WecF_RffT"/>
    <property type="match status" value="1"/>
</dbReference>
<dbReference type="InterPro" id="IPR009993">
    <property type="entry name" value="WecF"/>
</dbReference>
<dbReference type="NCBIfam" id="NF002753">
    <property type="entry name" value="PRK02797.1-2"/>
    <property type="match status" value="1"/>
</dbReference>
<dbReference type="Pfam" id="PF07429">
    <property type="entry name" value="Glyco_transf_56"/>
    <property type="match status" value="1"/>
</dbReference>
<proteinExistence type="inferred from homology"/>
<protein>
    <recommendedName>
        <fullName evidence="1">TDP-N-acetylfucosamine:lipid II N-acetylfucosaminyltransferase</fullName>
        <ecNumber evidence="1">2.4.1.325</ecNumber>
    </recommendedName>
    <alternativeName>
        <fullName evidence="1">4-alpha-L-fucosyltransferase</fullName>
    </alternativeName>
    <alternativeName>
        <fullName evidence="1">TDP-Fuc4NAc:lipid II Fuc4NAc transferase</fullName>
        <shortName evidence="1">Fuc4NAc transferase</shortName>
    </alternativeName>
</protein>
<comment type="function">
    <text evidence="1">Catalyzes the synthesis of Und-PP-GlcNAc-ManNAcA-Fuc4NAc (Lipid III), the third lipid-linked intermediate involved in ECA synthesis.</text>
</comment>
<comment type="catalytic activity">
    <reaction evidence="1">
        <text>beta-D-ManNAcA-(1-&gt;4)-alpha-D-GlcNAc-di-trans,octa-cis-undecaprenyl diphosphate + dTDP-4-acetamido-4,6-dideoxy-alpha-D-galactose = alpha-D-FucNAc4-(1-&gt;4)-beta-D-ManNAcA-(1-&gt;4)-D-GlcNAc-undecaprenyl diphosphate + dTDP + H(+)</text>
        <dbReference type="Rhea" id="RHEA:28759"/>
        <dbReference type="ChEBI" id="CHEBI:15378"/>
        <dbReference type="ChEBI" id="CHEBI:58369"/>
        <dbReference type="ChEBI" id="CHEBI:61495"/>
        <dbReference type="ChEBI" id="CHEBI:61496"/>
        <dbReference type="ChEBI" id="CHEBI:68493"/>
        <dbReference type="EC" id="2.4.1.325"/>
    </reaction>
</comment>
<comment type="pathway">
    <text evidence="1">Bacterial outer membrane biogenesis; enterobacterial common antigen biosynthesis.</text>
</comment>
<comment type="subcellular location">
    <subcellularLocation>
        <location evidence="1">Cell inner membrane</location>
        <topology evidence="1">Peripheral membrane protein</topology>
    </subcellularLocation>
</comment>
<comment type="similarity">
    <text evidence="1">Belongs to the glycosyltransferase 56 family.</text>
</comment>
<feature type="chain" id="PRO_0000216190" description="TDP-N-acetylfucosamine:lipid II N-acetylfucosaminyltransferase">
    <location>
        <begin position="1"/>
        <end position="361"/>
    </location>
</feature>
<organism>
    <name type="scientific">Yersinia pestis</name>
    <dbReference type="NCBI Taxonomy" id="632"/>
    <lineage>
        <taxon>Bacteria</taxon>
        <taxon>Pseudomonadati</taxon>
        <taxon>Pseudomonadota</taxon>
        <taxon>Gammaproteobacteria</taxon>
        <taxon>Enterobacterales</taxon>
        <taxon>Yersiniaceae</taxon>
        <taxon>Yersinia</taxon>
    </lineage>
</organism>
<evidence type="ECO:0000255" key="1">
    <source>
        <dbReference type="HAMAP-Rule" id="MF_01002"/>
    </source>
</evidence>
<reference key="1">
    <citation type="journal article" date="2001" name="Nature">
        <title>Genome sequence of Yersinia pestis, the causative agent of plague.</title>
        <authorList>
            <person name="Parkhill J."/>
            <person name="Wren B.W."/>
            <person name="Thomson N.R."/>
            <person name="Titball R.W."/>
            <person name="Holden M.T.G."/>
            <person name="Prentice M.B."/>
            <person name="Sebaihia M."/>
            <person name="James K.D."/>
            <person name="Churcher C.M."/>
            <person name="Mungall K.L."/>
            <person name="Baker S."/>
            <person name="Basham D."/>
            <person name="Bentley S.D."/>
            <person name="Brooks K."/>
            <person name="Cerdeno-Tarraga A.-M."/>
            <person name="Chillingworth T."/>
            <person name="Cronin A."/>
            <person name="Davies R.M."/>
            <person name="Davis P."/>
            <person name="Dougan G."/>
            <person name="Feltwell T."/>
            <person name="Hamlin N."/>
            <person name="Holroyd S."/>
            <person name="Jagels K."/>
            <person name="Karlyshev A.V."/>
            <person name="Leather S."/>
            <person name="Moule S."/>
            <person name="Oyston P.C.F."/>
            <person name="Quail M.A."/>
            <person name="Rutherford K.M."/>
            <person name="Simmonds M."/>
            <person name="Skelton J."/>
            <person name="Stevens K."/>
            <person name="Whitehead S."/>
            <person name="Barrell B.G."/>
        </authorList>
    </citation>
    <scope>NUCLEOTIDE SEQUENCE [LARGE SCALE GENOMIC DNA]</scope>
    <source>
        <strain>CO-92 / Biovar Orientalis</strain>
    </source>
</reference>
<reference key="2">
    <citation type="journal article" date="2002" name="J. Bacteriol.">
        <title>Genome sequence of Yersinia pestis KIM.</title>
        <authorList>
            <person name="Deng W."/>
            <person name="Burland V."/>
            <person name="Plunkett G. III"/>
            <person name="Boutin A."/>
            <person name="Mayhew G.F."/>
            <person name="Liss P."/>
            <person name="Perna N.T."/>
            <person name="Rose D.J."/>
            <person name="Mau B."/>
            <person name="Zhou S."/>
            <person name="Schwartz D.C."/>
            <person name="Fetherston J.D."/>
            <person name="Lindler L.E."/>
            <person name="Brubaker R.R."/>
            <person name="Plano G.V."/>
            <person name="Straley S.C."/>
            <person name="McDonough K.A."/>
            <person name="Nilles M.L."/>
            <person name="Matson J.S."/>
            <person name="Blattner F.R."/>
            <person name="Perry R.D."/>
        </authorList>
    </citation>
    <scope>NUCLEOTIDE SEQUENCE [LARGE SCALE GENOMIC DNA]</scope>
    <source>
        <strain>KIM10+ / Biovar Mediaevalis</strain>
    </source>
</reference>
<reference key="3">
    <citation type="journal article" date="2004" name="DNA Res.">
        <title>Complete genome sequence of Yersinia pestis strain 91001, an isolate avirulent to humans.</title>
        <authorList>
            <person name="Song Y."/>
            <person name="Tong Z."/>
            <person name="Wang J."/>
            <person name="Wang L."/>
            <person name="Guo Z."/>
            <person name="Han Y."/>
            <person name="Zhang J."/>
            <person name="Pei D."/>
            <person name="Zhou D."/>
            <person name="Qin H."/>
            <person name="Pang X."/>
            <person name="Han Y."/>
            <person name="Zhai J."/>
            <person name="Li M."/>
            <person name="Cui B."/>
            <person name="Qi Z."/>
            <person name="Jin L."/>
            <person name="Dai R."/>
            <person name="Chen F."/>
            <person name="Li S."/>
            <person name="Ye C."/>
            <person name="Du Z."/>
            <person name="Lin W."/>
            <person name="Wang J."/>
            <person name="Yu J."/>
            <person name="Yang H."/>
            <person name="Wang J."/>
            <person name="Huang P."/>
            <person name="Yang R."/>
        </authorList>
    </citation>
    <scope>NUCLEOTIDE SEQUENCE [LARGE SCALE GENOMIC DNA]</scope>
    <source>
        <strain>91001 / Biovar Mediaevalis</strain>
    </source>
</reference>
<gene>
    <name evidence="1" type="primary">wecF</name>
    <name evidence="1" type="synonym">rffT</name>
    <name type="ordered locus">YPO3857</name>
    <name type="ordered locus">y0371</name>
    <name type="ordered locus">YP_3188</name>
</gene>
<keyword id="KW-0997">Cell inner membrane</keyword>
<keyword id="KW-1003">Cell membrane</keyword>
<keyword id="KW-0328">Glycosyltransferase</keyword>
<keyword id="KW-0472">Membrane</keyword>
<keyword id="KW-1185">Reference proteome</keyword>
<keyword id="KW-0808">Transferase</keyword>
<name>WECF_YERPE</name>
<accession>Q8ZAF0</accession>
<accession>Q0WAF3</accession>